<dbReference type="EMBL" id="KX010968">
    <property type="protein sequence ID" value="ANC73388.1"/>
    <property type="molecule type" value="mRNA"/>
</dbReference>
<dbReference type="GlyCosmos" id="A0A172M4N1">
    <property type="glycosylation" value="1 site, No reported glycans"/>
</dbReference>
<dbReference type="GO" id="GO:0005576">
    <property type="term" value="C:extracellular region"/>
    <property type="evidence" value="ECO:0007669"/>
    <property type="project" value="UniProtKB-SubCell"/>
</dbReference>
<dbReference type="GO" id="GO:0030430">
    <property type="term" value="C:host cell cytoplasm"/>
    <property type="evidence" value="ECO:0007669"/>
    <property type="project" value="UniProtKB-SubCell"/>
</dbReference>
<dbReference type="GO" id="GO:0042025">
    <property type="term" value="C:host cell nucleus"/>
    <property type="evidence" value="ECO:0007669"/>
    <property type="project" value="UniProtKB-SubCell"/>
</dbReference>
<protein>
    <recommendedName>
        <fullName evidence="4">Secreted RxLR effector protein 68</fullName>
    </recommendedName>
</protein>
<organism>
    <name type="scientific">Plasmopara viticola</name>
    <name type="common">Downy mildew of grapevine</name>
    <name type="synonym">Botrytis viticola</name>
    <dbReference type="NCBI Taxonomy" id="143451"/>
    <lineage>
        <taxon>Eukaryota</taxon>
        <taxon>Sar</taxon>
        <taxon>Stramenopiles</taxon>
        <taxon>Oomycota</taxon>
        <taxon>Peronosporales</taxon>
        <taxon>Peronosporaceae</taxon>
        <taxon>Plasmopara</taxon>
    </lineage>
</organism>
<feature type="signal peptide" evidence="1">
    <location>
        <begin position="1"/>
        <end position="29"/>
    </location>
</feature>
<feature type="chain" id="PRO_5007999415" description="Secreted RxLR effector protein 68">
    <location>
        <begin position="30"/>
        <end position="130"/>
    </location>
</feature>
<feature type="short sequence motif" description="RxLR" evidence="6">
    <location>
        <begin position="45"/>
        <end position="48"/>
    </location>
</feature>
<feature type="glycosylation site" description="N-linked (GlcNAc...) asparagine" evidence="2">
    <location>
        <position position="36"/>
    </location>
</feature>
<accession>A0A172M4N1</accession>
<sequence length="130" mass="14013">MRCVCASIRRTRIIEFLMFFALSSSTASCAPFSVSNVTHASPRPRWLRWHEKTSMAGNPVSLSIATPNGAKSSSICSANTVGFTPDTYTCPDIRDSSTDTLSRSKRISSLSLTKPISSSSESETKVLSAS</sequence>
<name>RLR68_PLAVT</name>
<reference key="1">
    <citation type="journal article" date="2016" name="Front. Microbiol.">
        <title>Studying the mechanism of Plasmopara viticola RxLR effectors on suppressing plant immunity.</title>
        <authorList>
            <person name="Xiang J."/>
            <person name="Li X."/>
            <person name="Wu J."/>
            <person name="Yin L."/>
            <person name="Zhang Y."/>
            <person name="Lu J."/>
        </authorList>
    </citation>
    <scope>NUCLEOTIDE SEQUENCE [MRNA]</scope>
    <scope>INDUCTION</scope>
    <scope>FUNCTION</scope>
    <scope>SUBCELLULAR LOCATION</scope>
    <scope>DOMAIN</scope>
    <source>
        <strain>ZJ-1-1</strain>
    </source>
</reference>
<keyword id="KW-0325">Glycoprotein</keyword>
<keyword id="KW-1035">Host cytoplasm</keyword>
<keyword id="KW-1048">Host nucleus</keyword>
<keyword id="KW-0964">Secreted</keyword>
<keyword id="KW-0732">Signal</keyword>
<keyword id="KW-0843">Virulence</keyword>
<proteinExistence type="evidence at transcript level"/>
<comment type="function">
    <text evidence="3">Effector that acts as a broad suppressor of cell death to interrupt plant immunity. Inhibits cell death induced by cell death-inducing proteins, including the PAMP elicitor INF1 from P.infestans.</text>
</comment>
<comment type="subcellular location">
    <subcellularLocation>
        <location evidence="3">Secreted</location>
    </subcellularLocation>
    <subcellularLocation>
        <location evidence="3">Host cytoplasm</location>
    </subcellularLocation>
    <subcellularLocation>
        <location evidence="3">Host nucleus</location>
    </subcellularLocation>
</comment>
<comment type="induction">
    <text evidence="3">Expression is up-regulated at later stages of infection.</text>
</comment>
<comment type="domain">
    <text evidence="6">Has a conserved RxLR motif that acts to carry the protein into the host cell cytoplasm. Lacks the 'so-called' EER motif, which is found closely behind the RxLR motif in most of RxLR effector family members, but the presence of an EER motif is not always essential for the translocation of every RxLR effector into host cells, or for inducing a hypersensitive response.</text>
</comment>
<comment type="similarity">
    <text evidence="5">Belongs to the RxLR effector family.</text>
</comment>
<evidence type="ECO:0000255" key="1"/>
<evidence type="ECO:0000255" key="2">
    <source>
        <dbReference type="PROSITE-ProRule" id="PRU00498"/>
    </source>
</evidence>
<evidence type="ECO:0000269" key="3">
    <source>
    </source>
</evidence>
<evidence type="ECO:0000303" key="4">
    <source>
    </source>
</evidence>
<evidence type="ECO:0000305" key="5"/>
<evidence type="ECO:0000305" key="6">
    <source>
    </source>
</evidence>
<gene>
    <name evidence="4" type="primary">RxLR68</name>
</gene>